<reference evidence="9" key="1">
    <citation type="journal article" date="2000" name="Science">
        <title>The genome sequence of Drosophila melanogaster.</title>
        <authorList>
            <person name="Adams M.D."/>
            <person name="Celniker S.E."/>
            <person name="Holt R.A."/>
            <person name="Evans C.A."/>
            <person name="Gocayne J.D."/>
            <person name="Amanatides P.G."/>
            <person name="Scherer S.E."/>
            <person name="Li P.W."/>
            <person name="Hoskins R.A."/>
            <person name="Galle R.F."/>
            <person name="George R.A."/>
            <person name="Lewis S.E."/>
            <person name="Richards S."/>
            <person name="Ashburner M."/>
            <person name="Henderson S.N."/>
            <person name="Sutton G.G."/>
            <person name="Wortman J.R."/>
            <person name="Yandell M.D."/>
            <person name="Zhang Q."/>
            <person name="Chen L.X."/>
            <person name="Brandon R.C."/>
            <person name="Rogers Y.-H.C."/>
            <person name="Blazej R.G."/>
            <person name="Champe M."/>
            <person name="Pfeiffer B.D."/>
            <person name="Wan K.H."/>
            <person name="Doyle C."/>
            <person name="Baxter E.G."/>
            <person name="Helt G."/>
            <person name="Nelson C.R."/>
            <person name="Miklos G.L.G."/>
            <person name="Abril J.F."/>
            <person name="Agbayani A."/>
            <person name="An H.-J."/>
            <person name="Andrews-Pfannkoch C."/>
            <person name="Baldwin D."/>
            <person name="Ballew R.M."/>
            <person name="Basu A."/>
            <person name="Baxendale J."/>
            <person name="Bayraktaroglu L."/>
            <person name="Beasley E.M."/>
            <person name="Beeson K.Y."/>
            <person name="Benos P.V."/>
            <person name="Berman B.P."/>
            <person name="Bhandari D."/>
            <person name="Bolshakov S."/>
            <person name="Borkova D."/>
            <person name="Botchan M.R."/>
            <person name="Bouck J."/>
            <person name="Brokstein P."/>
            <person name="Brottier P."/>
            <person name="Burtis K.C."/>
            <person name="Busam D.A."/>
            <person name="Butler H."/>
            <person name="Cadieu E."/>
            <person name="Center A."/>
            <person name="Chandra I."/>
            <person name="Cherry J.M."/>
            <person name="Cawley S."/>
            <person name="Dahlke C."/>
            <person name="Davenport L.B."/>
            <person name="Davies P."/>
            <person name="de Pablos B."/>
            <person name="Delcher A."/>
            <person name="Deng Z."/>
            <person name="Mays A.D."/>
            <person name="Dew I."/>
            <person name="Dietz S.M."/>
            <person name="Dodson K."/>
            <person name="Doup L.E."/>
            <person name="Downes M."/>
            <person name="Dugan-Rocha S."/>
            <person name="Dunkov B.C."/>
            <person name="Dunn P."/>
            <person name="Durbin K.J."/>
            <person name="Evangelista C.C."/>
            <person name="Ferraz C."/>
            <person name="Ferriera S."/>
            <person name="Fleischmann W."/>
            <person name="Fosler C."/>
            <person name="Gabrielian A.E."/>
            <person name="Garg N.S."/>
            <person name="Gelbart W.M."/>
            <person name="Glasser K."/>
            <person name="Glodek A."/>
            <person name="Gong F."/>
            <person name="Gorrell J.H."/>
            <person name="Gu Z."/>
            <person name="Guan P."/>
            <person name="Harris M."/>
            <person name="Harris N.L."/>
            <person name="Harvey D.A."/>
            <person name="Heiman T.J."/>
            <person name="Hernandez J.R."/>
            <person name="Houck J."/>
            <person name="Hostin D."/>
            <person name="Houston K.A."/>
            <person name="Howland T.J."/>
            <person name="Wei M.-H."/>
            <person name="Ibegwam C."/>
            <person name="Jalali M."/>
            <person name="Kalush F."/>
            <person name="Karpen G.H."/>
            <person name="Ke Z."/>
            <person name="Kennison J.A."/>
            <person name="Ketchum K.A."/>
            <person name="Kimmel B.E."/>
            <person name="Kodira C.D."/>
            <person name="Kraft C.L."/>
            <person name="Kravitz S."/>
            <person name="Kulp D."/>
            <person name="Lai Z."/>
            <person name="Lasko P."/>
            <person name="Lei Y."/>
            <person name="Levitsky A.A."/>
            <person name="Li J.H."/>
            <person name="Li Z."/>
            <person name="Liang Y."/>
            <person name="Lin X."/>
            <person name="Liu X."/>
            <person name="Mattei B."/>
            <person name="McIntosh T.C."/>
            <person name="McLeod M.P."/>
            <person name="McPherson D."/>
            <person name="Merkulov G."/>
            <person name="Milshina N.V."/>
            <person name="Mobarry C."/>
            <person name="Morris J."/>
            <person name="Moshrefi A."/>
            <person name="Mount S.M."/>
            <person name="Moy M."/>
            <person name="Murphy B."/>
            <person name="Murphy L."/>
            <person name="Muzny D.M."/>
            <person name="Nelson D.L."/>
            <person name="Nelson D.R."/>
            <person name="Nelson K.A."/>
            <person name="Nixon K."/>
            <person name="Nusskern D.R."/>
            <person name="Pacleb J.M."/>
            <person name="Palazzolo M."/>
            <person name="Pittman G.S."/>
            <person name="Pan S."/>
            <person name="Pollard J."/>
            <person name="Puri V."/>
            <person name="Reese M.G."/>
            <person name="Reinert K."/>
            <person name="Remington K."/>
            <person name="Saunders R.D.C."/>
            <person name="Scheeler F."/>
            <person name="Shen H."/>
            <person name="Shue B.C."/>
            <person name="Siden-Kiamos I."/>
            <person name="Simpson M."/>
            <person name="Skupski M.P."/>
            <person name="Smith T.J."/>
            <person name="Spier E."/>
            <person name="Spradling A.C."/>
            <person name="Stapleton M."/>
            <person name="Strong R."/>
            <person name="Sun E."/>
            <person name="Svirskas R."/>
            <person name="Tector C."/>
            <person name="Turner R."/>
            <person name="Venter E."/>
            <person name="Wang A.H."/>
            <person name="Wang X."/>
            <person name="Wang Z.-Y."/>
            <person name="Wassarman D.A."/>
            <person name="Weinstock G.M."/>
            <person name="Weissenbach J."/>
            <person name="Williams S.M."/>
            <person name="Woodage T."/>
            <person name="Worley K.C."/>
            <person name="Wu D."/>
            <person name="Yang S."/>
            <person name="Yao Q.A."/>
            <person name="Ye J."/>
            <person name="Yeh R.-F."/>
            <person name="Zaveri J.S."/>
            <person name="Zhan M."/>
            <person name="Zhang G."/>
            <person name="Zhao Q."/>
            <person name="Zheng L."/>
            <person name="Zheng X.H."/>
            <person name="Zhong F.N."/>
            <person name="Zhong W."/>
            <person name="Zhou X."/>
            <person name="Zhu S.C."/>
            <person name="Zhu X."/>
            <person name="Smith H.O."/>
            <person name="Gibbs R.A."/>
            <person name="Myers E.W."/>
            <person name="Rubin G.M."/>
            <person name="Venter J.C."/>
        </authorList>
    </citation>
    <scope>NUCLEOTIDE SEQUENCE [LARGE SCALE GENOMIC DNA]</scope>
    <source>
        <strain evidence="9">Berkeley</strain>
    </source>
</reference>
<reference evidence="9" key="2">
    <citation type="journal article" date="2002" name="Genome Biol.">
        <title>Annotation of the Drosophila melanogaster euchromatic genome: a systematic review.</title>
        <authorList>
            <person name="Misra S."/>
            <person name="Crosby M.A."/>
            <person name="Mungall C.J."/>
            <person name="Matthews B.B."/>
            <person name="Campbell K.S."/>
            <person name="Hradecky P."/>
            <person name="Huang Y."/>
            <person name="Kaminker J.S."/>
            <person name="Millburn G.H."/>
            <person name="Prochnik S.E."/>
            <person name="Smith C.D."/>
            <person name="Tupy J.L."/>
            <person name="Whitfield E.J."/>
            <person name="Bayraktaroglu L."/>
            <person name="Berman B.P."/>
            <person name="Bettencourt B.R."/>
            <person name="Celniker S.E."/>
            <person name="de Grey A.D.N.J."/>
            <person name="Drysdale R.A."/>
            <person name="Harris N.L."/>
            <person name="Richter J."/>
            <person name="Russo S."/>
            <person name="Schroeder A.J."/>
            <person name="Shu S.Q."/>
            <person name="Stapleton M."/>
            <person name="Yamada C."/>
            <person name="Ashburner M."/>
            <person name="Gelbart W.M."/>
            <person name="Rubin G.M."/>
            <person name="Lewis S.E."/>
        </authorList>
    </citation>
    <scope>GENOME REANNOTATION</scope>
    <source>
        <strain evidence="9">Berkeley</strain>
    </source>
</reference>
<reference evidence="7" key="3">
    <citation type="journal article" date="2002" name="Genome Biol.">
        <title>A Drosophila full-length cDNA resource.</title>
        <authorList>
            <person name="Stapleton M."/>
            <person name="Carlson J.W."/>
            <person name="Brokstein P."/>
            <person name="Yu C."/>
            <person name="Champe M."/>
            <person name="George R.A."/>
            <person name="Guarin H."/>
            <person name="Kronmiller B."/>
            <person name="Pacleb J.M."/>
            <person name="Park S."/>
            <person name="Wan K.H."/>
            <person name="Rubin G.M."/>
            <person name="Celniker S.E."/>
        </authorList>
    </citation>
    <scope>NUCLEOTIDE SEQUENCE [LARGE SCALE MRNA]</scope>
    <source>
        <strain evidence="7">Berkeley</strain>
        <tissue evidence="7">Embryo</tissue>
    </source>
</reference>
<reference evidence="6" key="4">
    <citation type="journal article" date="2005" name="J. Neurobiol.">
        <title>D-Hillarin, a novel W180-domain protein, affects cytokinesis through interaction with the septin family member Pnut.</title>
        <authorList>
            <person name="Ji Y."/>
            <person name="Rath U."/>
            <person name="Girton J."/>
            <person name="Johansen K.M."/>
            <person name="Johansen J."/>
        </authorList>
    </citation>
    <scope>FUNCTION</scope>
    <scope>INTERACTION WITH PNUT</scope>
    <scope>SUBCELLULAR LOCATION</scope>
    <scope>TISSUE SPECIFICITY</scope>
    <scope>DEVELOPMENTAL STAGE</scope>
    <scope>DISRUPTION PHENOTYPE</scope>
</reference>
<protein>
    <recommendedName>
        <fullName evidence="8">Hillarin</fullName>
    </recommendedName>
    <alternativeName>
        <fullName evidence="5">D-Hillarin</fullName>
        <shortName evidence="5">D-hil</shortName>
    </alternativeName>
</protein>
<evidence type="ECO:0000255" key="1"/>
<evidence type="ECO:0000255" key="2">
    <source>
        <dbReference type="PROSITE-ProRule" id="PRU00125"/>
    </source>
</evidence>
<evidence type="ECO:0000256" key="3">
    <source>
        <dbReference type="SAM" id="MobiDB-lite"/>
    </source>
</evidence>
<evidence type="ECO:0000269" key="4">
    <source>
    </source>
</evidence>
<evidence type="ECO:0000303" key="5">
    <source>
    </source>
</evidence>
<evidence type="ECO:0000305" key="6"/>
<evidence type="ECO:0000312" key="7">
    <source>
        <dbReference type="EMBL" id="AAK93501.1"/>
    </source>
</evidence>
<evidence type="ECO:0000312" key="8">
    <source>
        <dbReference type="FlyBase" id="FBgn0050147"/>
    </source>
</evidence>
<evidence type="ECO:0000312" key="9">
    <source>
        <dbReference type="Proteomes" id="UP000000803"/>
    </source>
</evidence>
<organism evidence="9">
    <name type="scientific">Drosophila melanogaster</name>
    <name type="common">Fruit fly</name>
    <dbReference type="NCBI Taxonomy" id="7227"/>
    <lineage>
        <taxon>Eukaryota</taxon>
        <taxon>Metazoa</taxon>
        <taxon>Ecdysozoa</taxon>
        <taxon>Arthropoda</taxon>
        <taxon>Hexapoda</taxon>
        <taxon>Insecta</taxon>
        <taxon>Pterygota</taxon>
        <taxon>Neoptera</taxon>
        <taxon>Endopterygota</taxon>
        <taxon>Diptera</taxon>
        <taxon>Brachycera</taxon>
        <taxon>Muscomorpha</taxon>
        <taxon>Ephydroidea</taxon>
        <taxon>Drosophilidae</taxon>
        <taxon>Drosophila</taxon>
        <taxon>Sophophora</taxon>
    </lineage>
</organism>
<feature type="chain" id="PRO_0000437138" description="Hillarin">
    <location>
        <begin position="1"/>
        <end position="818"/>
    </location>
</feature>
<feature type="domain" description="LIM zinc-binding" evidence="2">
    <location>
        <begin position="9"/>
        <end position="76"/>
    </location>
</feature>
<feature type="region of interest" description="Disordered" evidence="3">
    <location>
        <begin position="97"/>
        <end position="141"/>
    </location>
</feature>
<feature type="coiled-coil region" evidence="1">
    <location>
        <begin position="216"/>
        <end position="272"/>
    </location>
</feature>
<feature type="compositionally biased region" description="Polar residues" evidence="3">
    <location>
        <begin position="117"/>
        <end position="137"/>
    </location>
</feature>
<feature type="sequence conflict" description="In Ref. 3; AAK93501." evidence="6" ref="3">
    <original>H</original>
    <variation>Q</variation>
    <location>
        <position position="788"/>
    </location>
</feature>
<feature type="sequence conflict" description="In Ref. 3; AAK93501." evidence="6" ref="3">
    <location>
        <position position="794"/>
    </location>
</feature>
<comment type="function">
    <text evidence="5">May act as a modulator of septin function during cytokinesis in the developing nervous system.</text>
</comment>
<comment type="subunit">
    <text evidence="4">Interacts with pnut.</text>
</comment>
<comment type="subcellular location">
    <subcellularLocation>
        <location evidence="4">Cytoplasm</location>
        <location evidence="4">Cell cortex</location>
    </subcellularLocation>
    <subcellularLocation>
        <location evidence="4">Cleavage furrow</location>
    </subcellularLocation>
    <text evidence="4">During mitosis, detected at the cell cortex in metaphase but is concentrated at the cleavage furrow at telophase. Colocalizes with pnut at the cell cortex.</text>
</comment>
<comment type="tissue specificity">
    <text evidence="4">Localizes to the neuropil of the embryonic central nervous system (at protein level). Also detected in third instar larval brain (at protein level).</text>
</comment>
<comment type="developmental stage">
    <text evidence="4">Very low levels detected in 0-6 hour embryos with expression up-regulated after 12 hours of embryogenesis and persisting into adult stages (at protein level).</text>
</comment>
<comment type="disruption phenotype">
    <text evidence="4">Mutants are viable with a 98.4% hatch rate which is close to the wild-type hatch rate. No apparent defects in the central nervous system.</text>
</comment>
<comment type="similarity">
    <text evidence="6">Belongs to the transglutaminase-like superfamily.</text>
</comment>
<proteinExistence type="evidence at protein level"/>
<keyword id="KW-0175">Coiled coil</keyword>
<keyword id="KW-0963">Cytoplasm</keyword>
<keyword id="KW-0440">LIM domain</keyword>
<keyword id="KW-0479">Metal-binding</keyword>
<keyword id="KW-1185">Reference proteome</keyword>
<keyword id="KW-0862">Zinc</keyword>
<gene>
    <name evidence="8" type="primary">Hil</name>
    <name evidence="8" type="ORF">CG30147</name>
</gene>
<accession>Q0E908</accession>
<accession>Q960G2</accession>
<dbReference type="EMBL" id="AE013599">
    <property type="protein sequence ID" value="AAF57448.2"/>
    <property type="molecule type" value="Genomic_DNA"/>
</dbReference>
<dbReference type="EMBL" id="AE013599">
    <property type="protein sequence ID" value="AAF57449.2"/>
    <property type="molecule type" value="Genomic_DNA"/>
</dbReference>
<dbReference type="EMBL" id="AY052077">
    <property type="protein sequence ID" value="AAK93501.1"/>
    <property type="molecule type" value="mRNA"/>
</dbReference>
<dbReference type="RefSeq" id="NP_611493.2">
    <property type="nucleotide sequence ID" value="NM_137649.3"/>
</dbReference>
<dbReference type="RefSeq" id="NP_725980.1">
    <property type="nucleotide sequence ID" value="NM_166402.2"/>
</dbReference>
<dbReference type="SMR" id="Q0E908"/>
<dbReference type="FunCoup" id="Q0E908">
    <property type="interactions" value="80"/>
</dbReference>
<dbReference type="IntAct" id="Q0E908">
    <property type="interactions" value="3"/>
</dbReference>
<dbReference type="STRING" id="7227.FBpp0085567"/>
<dbReference type="GlyGen" id="Q0E908">
    <property type="glycosylation" value="1 site"/>
</dbReference>
<dbReference type="PaxDb" id="7227-FBpp0085567"/>
<dbReference type="EnsemblMetazoa" id="FBtr0086255">
    <property type="protein sequence ID" value="FBpp0085567"/>
    <property type="gene ID" value="FBgn0050147"/>
</dbReference>
<dbReference type="EnsemblMetazoa" id="FBtr0086256">
    <property type="protein sequence ID" value="FBpp0085568"/>
    <property type="gene ID" value="FBgn0050147"/>
</dbReference>
<dbReference type="GeneID" id="37328"/>
<dbReference type="KEGG" id="dme:Dmel_CG30147"/>
<dbReference type="UCSC" id="CG30147-RA">
    <property type="organism name" value="d. melanogaster"/>
</dbReference>
<dbReference type="UCSC" id="CG30147-RB">
    <property type="organism name" value="d. melanogaster"/>
</dbReference>
<dbReference type="AGR" id="FB:FBgn0050147"/>
<dbReference type="CTD" id="37328"/>
<dbReference type="FlyBase" id="FBgn0050147">
    <property type="gene designation" value="Hil"/>
</dbReference>
<dbReference type="VEuPathDB" id="VectorBase:FBgn0050147"/>
<dbReference type="eggNOG" id="KOG1700">
    <property type="taxonomic scope" value="Eukaryota"/>
</dbReference>
<dbReference type="eggNOG" id="KOG4575">
    <property type="taxonomic scope" value="Eukaryota"/>
</dbReference>
<dbReference type="GeneTree" id="ENSGT00940000172737"/>
<dbReference type="HOGENOM" id="CLU_009339_1_0_1"/>
<dbReference type="InParanoid" id="Q0E908"/>
<dbReference type="OMA" id="NEFQDEW"/>
<dbReference type="OrthoDB" id="6129702at2759"/>
<dbReference type="PhylomeDB" id="Q0E908"/>
<dbReference type="BioGRID-ORCS" id="37328">
    <property type="hits" value="0 hits in 1 CRISPR screen"/>
</dbReference>
<dbReference type="GenomeRNAi" id="37328"/>
<dbReference type="PRO" id="PR:Q0E908"/>
<dbReference type="Proteomes" id="UP000000803">
    <property type="component" value="Chromosome 2R"/>
</dbReference>
<dbReference type="Bgee" id="FBgn0050147">
    <property type="expression patterns" value="Expressed in visual pigment cell (sensu Nematoda and Protostomia) in insect head and 75 other cell types or tissues"/>
</dbReference>
<dbReference type="GO" id="GO:0005938">
    <property type="term" value="C:cell cortex"/>
    <property type="evidence" value="ECO:0000314"/>
    <property type="project" value="UniProtKB"/>
</dbReference>
<dbReference type="GO" id="GO:0032154">
    <property type="term" value="C:cleavage furrow"/>
    <property type="evidence" value="ECO:0000314"/>
    <property type="project" value="UniProtKB"/>
</dbReference>
<dbReference type="GO" id="GO:0005737">
    <property type="term" value="C:cytoplasm"/>
    <property type="evidence" value="ECO:0000318"/>
    <property type="project" value="GO_Central"/>
</dbReference>
<dbReference type="GO" id="GO:0046872">
    <property type="term" value="F:metal ion binding"/>
    <property type="evidence" value="ECO:0007669"/>
    <property type="project" value="UniProtKB-KW"/>
</dbReference>
<dbReference type="CDD" id="cd09443">
    <property type="entry name" value="LIM_Ltd-1"/>
    <property type="match status" value="1"/>
</dbReference>
<dbReference type="FunFam" id="2.10.110.10:FF:000108">
    <property type="entry name" value="LIM domain containing protein"/>
    <property type="match status" value="1"/>
</dbReference>
<dbReference type="Gene3D" id="2.10.110.10">
    <property type="entry name" value="Cysteine Rich Protein"/>
    <property type="match status" value="1"/>
</dbReference>
<dbReference type="InterPro" id="IPR056564">
    <property type="entry name" value="Ig-like_KY"/>
</dbReference>
<dbReference type="InterPro" id="IPR038765">
    <property type="entry name" value="Papain-like_cys_pep_sf"/>
</dbReference>
<dbReference type="InterPro" id="IPR053041">
    <property type="entry name" value="Transglut-like_Superfamily_Mod"/>
</dbReference>
<dbReference type="InterPro" id="IPR002931">
    <property type="entry name" value="Transglutaminase-like"/>
</dbReference>
<dbReference type="InterPro" id="IPR001781">
    <property type="entry name" value="Znf_LIM"/>
</dbReference>
<dbReference type="PANTHER" id="PTHR47020">
    <property type="entry name" value="HILLARIN"/>
    <property type="match status" value="1"/>
</dbReference>
<dbReference type="PANTHER" id="PTHR47020:SF1">
    <property type="entry name" value="HILLARIN"/>
    <property type="match status" value="1"/>
</dbReference>
<dbReference type="Pfam" id="PF23265">
    <property type="entry name" value="Ig-like_KY"/>
    <property type="match status" value="2"/>
</dbReference>
<dbReference type="SMART" id="SM00132">
    <property type="entry name" value="LIM"/>
    <property type="match status" value="1"/>
</dbReference>
<dbReference type="SMART" id="SM00460">
    <property type="entry name" value="TGc"/>
    <property type="match status" value="1"/>
</dbReference>
<dbReference type="SUPFAM" id="SSF54001">
    <property type="entry name" value="Cysteine proteinases"/>
    <property type="match status" value="1"/>
</dbReference>
<dbReference type="PROSITE" id="PS00478">
    <property type="entry name" value="LIM_DOMAIN_1"/>
    <property type="match status" value="1"/>
</dbReference>
<dbReference type="PROSITE" id="PS50023">
    <property type="entry name" value="LIM_DOMAIN_2"/>
    <property type="match status" value="1"/>
</dbReference>
<name>HIL_DROME</name>
<sequence length="818" mass="94465">MYRPNFYESTCLRCSETVYQVDRVGPLKDFTFFHSGCFKCVHCGTKLTLKTYFNNQHKQDDKEVYCSSHVPKSGPGHLDQTSVGIRQALNAPRTNKFVNEQIRGTRSEVDGGPLGGSRQSTPNGYGSREISSPSQNDSDYKYGRFDASALHIAHALKQTEIQKAYNKAREKPIDFYLAREEQAHLEMKHRKEEDDLYRKFASKRAEEDRKIQDEFQDEWERELQRLTHKFEKELATSRRSRDEANILTMRHEQQKEDLEKNMTLRRSKKKESITRKMLEHERYETAALVDRQSSEMLELISARRSEYMQSESIFLDDEFSEGAVPVEYPLNAPIPAPPAVSKFQIYTDPIEFEDVDRIAISVAQEDQKTFTDLVRQLVGRCTTDIEKARTIFRWITVKNLNAMHFDDDLRGDTPMGLLRGIKYGTESYHVLFKRLCSYAGLHCVVIKGYSKSAGYQPGVKFQDSRFRNSWNAVYVAGAWRFVQCNWGARHLVNAKEAPKQGRGKNDSLRYEYDDHYFLTDPREFIYEFYPLQEEWQLLKRPITLREFENLPFVRSLFFRYGLHFADEGYGAVVFTDDTGAATVRIAMPTDMQSCLIFHYNLKFYDSDEELSYDGVSLKRFVMQSVIGNIVAFRVHAPCSGAFLLDIFANAVTPQEYLTGEPMKFKSVCKFKICCEELQTVMVPLPDCASGEWGPTKATRLFGLIPITHQDPLIFAGRSLDLQFRMSRPLTDFMATLHKNGIEEKKLAKYVTHSTLDDIVTFIINFPEEGQYGLDIYTRELGGPQHHHHHNNNNSSSSSGEKHLLTHCCKYLINSSKRN</sequence>